<sequence>MNGLCCCTPCKPRYRRLVDSIYPRAVTDGLLHSNMQKLTFYAISHPEKLERIGEYLVMRMVRDLNRQRPVQVKIAVEAMDQLLQACHSSPSLPQFSENHLRMVQRLLESNNAKMEQLATDSFVTFSNIEESSPSYHRQYDFFIDKFSQMCHANPQAAYGEDFRLARCAGLRGLRGVVWKSVTDDLHPNIWEQQHMDKIVPSILFNLQEPDDNGGFSSSHIPKFDNNFTDSTQSHRGDDEATPKVLSDRCLRELMGKASFGSLRAVIEPVLKHMDLHKRWSPPPSFAIHVFRAIIYSIQSQNSYFVIQELINHLDSMCSADASTRIGIATVLSSIVSIAGTSIGPLLLSIFNSLLKHLRTSVDFERSGKCSDQPAEKMYQEALINAMGDFANALPDYQKVEMMMFTVGNIPNLDERKSKQGEEFLQHVLVKTLLKVATKYRTAYLATVFTDSFLDTLLRLALVRDPQVRLATQQIFHTLLDRHDNAANLVHLGYELDVADVQLTVEKCSRADQMFMRKHIGDITYMLWRAAAAADETDLSTHADAILCTMSLLCIESLVELFRLSMALQQLALDTKQNFSDAKRNSIHNIVAKYMNLSAQLIANPSLCQQVQHVVGCRAQRGIPGLNLLLSVKESPMNDDPLSSTAVNGTIPEGTPRTITEGDHALLFNIEDVAESLKASGKDASRLFVPFNMSLNGRDGNGDSWQREDGQNFDSTDGRESPDGYKTVGIDDVSVDMSVDWTPPISRKQSRRNTIFSIVNPPKLNASTVDDLKAYANASFDPIEEDRKEKELTGSILSEIRNTDFEERVNTNESLNERGDLSKSIARLLVRNGETTKVRDIGRPTKPKNVFEIELPSFAY</sequence>
<gene>
    <name evidence="3" type="primary">efr-3</name>
    <name evidence="3" type="ORF">CBG02625</name>
</gene>
<keyword id="KW-1185">Reference proteome</keyword>
<accession>Q620W3</accession>
<accession>A8WTW3</accession>
<proteinExistence type="inferred from homology"/>
<reference key="1">
    <citation type="journal article" date="2003" name="PLoS Biol.">
        <title>The genome sequence of Caenorhabditis briggsae: a platform for comparative genomics.</title>
        <authorList>
            <person name="Stein L.D."/>
            <person name="Bao Z."/>
            <person name="Blasiar D."/>
            <person name="Blumenthal T."/>
            <person name="Brent M.R."/>
            <person name="Chen N."/>
            <person name="Chinwalla A."/>
            <person name="Clarke L."/>
            <person name="Clee C."/>
            <person name="Coghlan A."/>
            <person name="Coulson A."/>
            <person name="D'Eustachio P."/>
            <person name="Fitch D.H.A."/>
            <person name="Fulton L.A."/>
            <person name="Fulton R.E."/>
            <person name="Griffiths-Jones S."/>
            <person name="Harris T.W."/>
            <person name="Hillier L.W."/>
            <person name="Kamath R."/>
            <person name="Kuwabara P.E."/>
            <person name="Mardis E.R."/>
            <person name="Marra M.A."/>
            <person name="Miner T.L."/>
            <person name="Minx P."/>
            <person name="Mullikin J.C."/>
            <person name="Plumb R.W."/>
            <person name="Rogers J."/>
            <person name="Schein J.E."/>
            <person name="Sohrmann M."/>
            <person name="Spieth J."/>
            <person name="Stajich J.E."/>
            <person name="Wei C."/>
            <person name="Willey D."/>
            <person name="Wilson R.K."/>
            <person name="Durbin R.M."/>
            <person name="Waterston R.H."/>
        </authorList>
    </citation>
    <scope>NUCLEOTIDE SEQUENCE [LARGE SCALE GENOMIC DNA]</scope>
    <source>
        <strain>AF16</strain>
    </source>
</reference>
<name>EFR3_CAEBR</name>
<comment type="similarity">
    <text evidence="2">Belongs to the EFR3 family.</text>
</comment>
<evidence type="ECO:0000256" key="1">
    <source>
        <dbReference type="SAM" id="MobiDB-lite"/>
    </source>
</evidence>
<evidence type="ECO:0000305" key="2"/>
<evidence type="ECO:0000312" key="3">
    <source>
        <dbReference type="WormBase" id="CBG02625"/>
    </source>
</evidence>
<feature type="chain" id="PRO_0000270769" description="Protein EFR3 homolog">
    <location>
        <begin position="1"/>
        <end position="859"/>
    </location>
</feature>
<feature type="region of interest" description="Disordered" evidence="1">
    <location>
        <begin position="638"/>
        <end position="657"/>
    </location>
</feature>
<feature type="region of interest" description="Disordered" evidence="1">
    <location>
        <begin position="697"/>
        <end position="724"/>
    </location>
</feature>
<feature type="compositionally biased region" description="Basic and acidic residues" evidence="1">
    <location>
        <begin position="704"/>
        <end position="722"/>
    </location>
</feature>
<protein>
    <recommendedName>
        <fullName>Protein EFR3 homolog</fullName>
    </recommendedName>
</protein>
<dbReference type="EMBL" id="HE601438">
    <property type="protein sequence ID" value="CAP23925.3"/>
    <property type="molecule type" value="Genomic_DNA"/>
</dbReference>
<dbReference type="RefSeq" id="XP_002630901.1">
    <property type="nucleotide sequence ID" value="XM_002630855.1"/>
</dbReference>
<dbReference type="FunCoup" id="Q620W3">
    <property type="interactions" value="2707"/>
</dbReference>
<dbReference type="STRING" id="6238.Q620W3"/>
<dbReference type="GeneID" id="8572417"/>
<dbReference type="KEGG" id="cbr:CBG_02625"/>
<dbReference type="CTD" id="8572417"/>
<dbReference type="WormBase" id="CBG02625">
    <property type="protein sequence ID" value="CBP45581"/>
    <property type="gene ID" value="WBGene00025644"/>
    <property type="gene designation" value="efr-3"/>
</dbReference>
<dbReference type="eggNOG" id="KOG1877">
    <property type="taxonomic scope" value="Eukaryota"/>
</dbReference>
<dbReference type="HOGENOM" id="CLU_012674_2_0_1"/>
<dbReference type="InParanoid" id="Q620W3"/>
<dbReference type="OMA" id="QMCHANP"/>
<dbReference type="Proteomes" id="UP000008549">
    <property type="component" value="Unassembled WGS sequence"/>
</dbReference>
<dbReference type="GO" id="GO:0005886">
    <property type="term" value="C:plasma membrane"/>
    <property type="evidence" value="ECO:0000318"/>
    <property type="project" value="GO_Central"/>
</dbReference>
<dbReference type="GO" id="GO:0072659">
    <property type="term" value="P:protein localization to plasma membrane"/>
    <property type="evidence" value="ECO:0000318"/>
    <property type="project" value="GO_Central"/>
</dbReference>
<dbReference type="Gene3D" id="1.25.10.10">
    <property type="entry name" value="Leucine-rich Repeat Variant"/>
    <property type="match status" value="1"/>
</dbReference>
<dbReference type="InterPro" id="IPR011989">
    <property type="entry name" value="ARM-like"/>
</dbReference>
<dbReference type="InterPro" id="IPR016024">
    <property type="entry name" value="ARM-type_fold"/>
</dbReference>
<dbReference type="InterPro" id="IPR049152">
    <property type="entry name" value="EFR3-like_ARM"/>
</dbReference>
<dbReference type="InterPro" id="IPR051851">
    <property type="entry name" value="EFR3_Homologs"/>
</dbReference>
<dbReference type="PANTHER" id="PTHR12444">
    <property type="entry name" value="PROTEIN EFR3 HOMOLOG CMP44E"/>
    <property type="match status" value="1"/>
</dbReference>
<dbReference type="PANTHER" id="PTHR12444:SF8">
    <property type="entry name" value="PROTEIN EFR3 HOMOLOG CMP44E"/>
    <property type="match status" value="1"/>
</dbReference>
<dbReference type="Pfam" id="PF21052">
    <property type="entry name" value="EFR3_ARM"/>
    <property type="match status" value="1"/>
</dbReference>
<dbReference type="SUPFAM" id="SSF48371">
    <property type="entry name" value="ARM repeat"/>
    <property type="match status" value="1"/>
</dbReference>
<organism>
    <name type="scientific">Caenorhabditis briggsae</name>
    <dbReference type="NCBI Taxonomy" id="6238"/>
    <lineage>
        <taxon>Eukaryota</taxon>
        <taxon>Metazoa</taxon>
        <taxon>Ecdysozoa</taxon>
        <taxon>Nematoda</taxon>
        <taxon>Chromadorea</taxon>
        <taxon>Rhabditida</taxon>
        <taxon>Rhabditina</taxon>
        <taxon>Rhabditomorpha</taxon>
        <taxon>Rhabditoidea</taxon>
        <taxon>Rhabditidae</taxon>
        <taxon>Peloderinae</taxon>
        <taxon>Caenorhabditis</taxon>
    </lineage>
</organism>